<name>MRAY_NITOC</name>
<sequence length="358" mass="38776">MLLYVTDYLARFDSGFHVFQYLTLRAILGVLTALVISFVVGPPMIRRLKFVGQPVRSNGPTTHLCKAGTPTMGGALILVAIAAATLLWADLSNRYIWVVLVVTLLFGGVGFVDDYKKLLAKDSRGLTSRYKYFWQSVIALGVALFLYFTASVAAETELIVPFFKDVAVNLGGYYVLLTYFVVVGSSNAVNLTDGLDGLAVLPTVLVGGALGIFAYAAGHSGFAQYLGIPYIPEAGELVVFCGALVGAGLGFLWFNAYPAQVFMGDIGALALGAALGILAVLVRQELVLFIMGGVFVVETVSVMLQVASYKLTGRRIFRMAPLHHHFEIKGWPEPRVIVRFWIITVILVLIGLATLKIR</sequence>
<gene>
    <name evidence="1" type="primary">mraY</name>
    <name type="ordered locus">Noc_2864</name>
</gene>
<organism>
    <name type="scientific">Nitrosococcus oceani (strain ATCC 19707 / BCRC 17464 / JCM 30415 / NCIMB 11848 / C-107)</name>
    <dbReference type="NCBI Taxonomy" id="323261"/>
    <lineage>
        <taxon>Bacteria</taxon>
        <taxon>Pseudomonadati</taxon>
        <taxon>Pseudomonadota</taxon>
        <taxon>Gammaproteobacteria</taxon>
        <taxon>Chromatiales</taxon>
        <taxon>Chromatiaceae</taxon>
        <taxon>Nitrosococcus</taxon>
    </lineage>
</organism>
<accession>Q3J786</accession>
<feature type="chain" id="PRO_0000235460" description="Phospho-N-acetylmuramoyl-pentapeptide-transferase">
    <location>
        <begin position="1"/>
        <end position="358"/>
    </location>
</feature>
<feature type="transmembrane region" description="Helical" evidence="1">
    <location>
        <begin position="21"/>
        <end position="41"/>
    </location>
</feature>
<feature type="transmembrane region" description="Helical" evidence="1">
    <location>
        <begin position="71"/>
        <end position="91"/>
    </location>
</feature>
<feature type="transmembrane region" description="Helical" evidence="1">
    <location>
        <begin position="95"/>
        <end position="115"/>
    </location>
</feature>
<feature type="transmembrane region" description="Helical" evidence="1">
    <location>
        <begin position="133"/>
        <end position="153"/>
    </location>
</feature>
<feature type="transmembrane region" description="Helical" evidence="1">
    <location>
        <begin position="166"/>
        <end position="186"/>
    </location>
</feature>
<feature type="transmembrane region" description="Helical" evidence="1">
    <location>
        <begin position="197"/>
        <end position="217"/>
    </location>
</feature>
<feature type="transmembrane region" description="Helical" evidence="1">
    <location>
        <begin position="234"/>
        <end position="254"/>
    </location>
</feature>
<feature type="transmembrane region" description="Helical" evidence="1">
    <location>
        <begin position="261"/>
        <end position="281"/>
    </location>
</feature>
<feature type="transmembrane region" description="Helical" evidence="1">
    <location>
        <begin position="286"/>
        <end position="306"/>
    </location>
</feature>
<feature type="transmembrane region" description="Helical" evidence="1">
    <location>
        <begin position="337"/>
        <end position="357"/>
    </location>
</feature>
<comment type="function">
    <text evidence="1">Catalyzes the initial step of the lipid cycle reactions in the biosynthesis of the cell wall peptidoglycan: transfers peptidoglycan precursor phospho-MurNAc-pentapeptide from UDP-MurNAc-pentapeptide onto the lipid carrier undecaprenyl phosphate, yielding undecaprenyl-pyrophosphoryl-MurNAc-pentapeptide, known as lipid I.</text>
</comment>
<comment type="catalytic activity">
    <reaction evidence="1">
        <text>UDP-N-acetyl-alpha-D-muramoyl-L-alanyl-gamma-D-glutamyl-meso-2,6-diaminopimeloyl-D-alanyl-D-alanine + di-trans,octa-cis-undecaprenyl phosphate = di-trans,octa-cis-undecaprenyl diphospho-N-acetyl-alpha-D-muramoyl-L-alanyl-D-glutamyl-meso-2,6-diaminopimeloyl-D-alanyl-D-alanine + UMP</text>
        <dbReference type="Rhea" id="RHEA:28386"/>
        <dbReference type="ChEBI" id="CHEBI:57865"/>
        <dbReference type="ChEBI" id="CHEBI:60392"/>
        <dbReference type="ChEBI" id="CHEBI:61386"/>
        <dbReference type="ChEBI" id="CHEBI:61387"/>
        <dbReference type="EC" id="2.7.8.13"/>
    </reaction>
</comment>
<comment type="cofactor">
    <cofactor evidence="1">
        <name>Mg(2+)</name>
        <dbReference type="ChEBI" id="CHEBI:18420"/>
    </cofactor>
</comment>
<comment type="pathway">
    <text evidence="1">Cell wall biogenesis; peptidoglycan biosynthesis.</text>
</comment>
<comment type="subcellular location">
    <subcellularLocation>
        <location evidence="1">Cell inner membrane</location>
        <topology evidence="1">Multi-pass membrane protein</topology>
    </subcellularLocation>
</comment>
<comment type="similarity">
    <text evidence="1">Belongs to the glycosyltransferase 4 family. MraY subfamily.</text>
</comment>
<reference key="1">
    <citation type="journal article" date="2006" name="Appl. Environ. Microbiol.">
        <title>Complete genome sequence of the marine, chemolithoautotrophic, ammonia-oxidizing bacterium Nitrosococcus oceani ATCC 19707.</title>
        <authorList>
            <person name="Klotz M.G."/>
            <person name="Arp D.J."/>
            <person name="Chain P.S.G."/>
            <person name="El-Sheikh A.F."/>
            <person name="Hauser L.J."/>
            <person name="Hommes N.G."/>
            <person name="Larimer F.W."/>
            <person name="Malfatti S.A."/>
            <person name="Norton J.M."/>
            <person name="Poret-Peterson A.T."/>
            <person name="Vergez L.M."/>
            <person name="Ward B.B."/>
        </authorList>
    </citation>
    <scope>NUCLEOTIDE SEQUENCE [LARGE SCALE GENOMIC DNA]</scope>
    <source>
        <strain>ATCC 19707 / BCRC 17464 / JCM 30415 / NCIMB 11848 / C-107</strain>
    </source>
</reference>
<protein>
    <recommendedName>
        <fullName evidence="1">Phospho-N-acetylmuramoyl-pentapeptide-transferase</fullName>
        <ecNumber evidence="1">2.7.8.13</ecNumber>
    </recommendedName>
    <alternativeName>
        <fullName evidence="1">UDP-MurNAc-pentapeptide phosphotransferase</fullName>
    </alternativeName>
</protein>
<proteinExistence type="inferred from homology"/>
<dbReference type="EC" id="2.7.8.13" evidence="1"/>
<dbReference type="EMBL" id="CP000127">
    <property type="protein sequence ID" value="ABA59310.1"/>
    <property type="molecule type" value="Genomic_DNA"/>
</dbReference>
<dbReference type="RefSeq" id="WP_002813877.1">
    <property type="nucleotide sequence ID" value="NC_007484.1"/>
</dbReference>
<dbReference type="SMR" id="Q3J786"/>
<dbReference type="FunCoup" id="Q3J786">
    <property type="interactions" value="385"/>
</dbReference>
<dbReference type="STRING" id="323261.Noc_2864"/>
<dbReference type="KEGG" id="noc:Noc_2864"/>
<dbReference type="eggNOG" id="COG0472">
    <property type="taxonomic scope" value="Bacteria"/>
</dbReference>
<dbReference type="HOGENOM" id="CLU_023982_0_0_6"/>
<dbReference type="InParanoid" id="Q3J786"/>
<dbReference type="UniPathway" id="UPA00219"/>
<dbReference type="Proteomes" id="UP000006838">
    <property type="component" value="Chromosome"/>
</dbReference>
<dbReference type="GO" id="GO:0005886">
    <property type="term" value="C:plasma membrane"/>
    <property type="evidence" value="ECO:0007669"/>
    <property type="project" value="UniProtKB-SubCell"/>
</dbReference>
<dbReference type="GO" id="GO:0046872">
    <property type="term" value="F:metal ion binding"/>
    <property type="evidence" value="ECO:0007669"/>
    <property type="project" value="UniProtKB-KW"/>
</dbReference>
<dbReference type="GO" id="GO:0008963">
    <property type="term" value="F:phospho-N-acetylmuramoyl-pentapeptide-transferase activity"/>
    <property type="evidence" value="ECO:0007669"/>
    <property type="project" value="UniProtKB-UniRule"/>
</dbReference>
<dbReference type="GO" id="GO:0051992">
    <property type="term" value="F:UDP-N-acetylmuramoyl-L-alanyl-D-glutamyl-meso-2,6-diaminopimelyl-D-alanyl-D-alanine:undecaprenyl-phosphate transferase activity"/>
    <property type="evidence" value="ECO:0007669"/>
    <property type="project" value="RHEA"/>
</dbReference>
<dbReference type="GO" id="GO:0051301">
    <property type="term" value="P:cell division"/>
    <property type="evidence" value="ECO:0007669"/>
    <property type="project" value="UniProtKB-KW"/>
</dbReference>
<dbReference type="GO" id="GO:0071555">
    <property type="term" value="P:cell wall organization"/>
    <property type="evidence" value="ECO:0007669"/>
    <property type="project" value="UniProtKB-KW"/>
</dbReference>
<dbReference type="GO" id="GO:0009252">
    <property type="term" value="P:peptidoglycan biosynthetic process"/>
    <property type="evidence" value="ECO:0007669"/>
    <property type="project" value="UniProtKB-UniRule"/>
</dbReference>
<dbReference type="GO" id="GO:0008360">
    <property type="term" value="P:regulation of cell shape"/>
    <property type="evidence" value="ECO:0007669"/>
    <property type="project" value="UniProtKB-KW"/>
</dbReference>
<dbReference type="CDD" id="cd06852">
    <property type="entry name" value="GT_MraY"/>
    <property type="match status" value="1"/>
</dbReference>
<dbReference type="HAMAP" id="MF_00038">
    <property type="entry name" value="MraY"/>
    <property type="match status" value="1"/>
</dbReference>
<dbReference type="InterPro" id="IPR000715">
    <property type="entry name" value="Glycosyl_transferase_4"/>
</dbReference>
<dbReference type="InterPro" id="IPR003524">
    <property type="entry name" value="PNAcMuramoyl-5peptid_Trfase"/>
</dbReference>
<dbReference type="InterPro" id="IPR018480">
    <property type="entry name" value="PNAcMuramoyl-5peptid_Trfase_CS"/>
</dbReference>
<dbReference type="NCBIfam" id="TIGR00445">
    <property type="entry name" value="mraY"/>
    <property type="match status" value="1"/>
</dbReference>
<dbReference type="PANTHER" id="PTHR22926">
    <property type="entry name" value="PHOSPHO-N-ACETYLMURAMOYL-PENTAPEPTIDE-TRANSFERASE"/>
    <property type="match status" value="1"/>
</dbReference>
<dbReference type="PANTHER" id="PTHR22926:SF5">
    <property type="entry name" value="PHOSPHO-N-ACETYLMURAMOYL-PENTAPEPTIDE-TRANSFERASE HOMOLOG"/>
    <property type="match status" value="1"/>
</dbReference>
<dbReference type="Pfam" id="PF00953">
    <property type="entry name" value="Glycos_transf_4"/>
    <property type="match status" value="1"/>
</dbReference>
<dbReference type="Pfam" id="PF10555">
    <property type="entry name" value="MraY_sig1"/>
    <property type="match status" value="1"/>
</dbReference>
<dbReference type="PROSITE" id="PS01347">
    <property type="entry name" value="MRAY_1"/>
    <property type="match status" value="1"/>
</dbReference>
<dbReference type="PROSITE" id="PS01348">
    <property type="entry name" value="MRAY_2"/>
    <property type="match status" value="1"/>
</dbReference>
<keyword id="KW-0131">Cell cycle</keyword>
<keyword id="KW-0132">Cell division</keyword>
<keyword id="KW-0997">Cell inner membrane</keyword>
<keyword id="KW-1003">Cell membrane</keyword>
<keyword id="KW-0133">Cell shape</keyword>
<keyword id="KW-0961">Cell wall biogenesis/degradation</keyword>
<keyword id="KW-0460">Magnesium</keyword>
<keyword id="KW-0472">Membrane</keyword>
<keyword id="KW-0479">Metal-binding</keyword>
<keyword id="KW-0573">Peptidoglycan synthesis</keyword>
<keyword id="KW-1185">Reference proteome</keyword>
<keyword id="KW-0808">Transferase</keyword>
<keyword id="KW-0812">Transmembrane</keyword>
<keyword id="KW-1133">Transmembrane helix</keyword>
<evidence type="ECO:0000255" key="1">
    <source>
        <dbReference type="HAMAP-Rule" id="MF_00038"/>
    </source>
</evidence>